<protein>
    <recommendedName>
        <fullName>Lichenase</fullName>
        <ecNumber>3.2.1.73</ecNumber>
    </recommendedName>
    <alternativeName>
        <fullName>Endo-beta-1,3-1,4 glucanase</fullName>
    </alternativeName>
</protein>
<reference key="1">
    <citation type="journal article" date="1988" name="Gene">
        <title>Primary structure of a hormonally regulated beta-glucanase of Nicotiana plumbaginifolia.</title>
        <authorList>
            <person name="de Loose M."/>
            <person name="Alliotte T."/>
            <person name="Gheysen G."/>
            <person name="Genetello C."/>
            <person name="Gielen J."/>
            <person name="Soetaert P."/>
            <person name="van Montagu M."/>
            <person name="Inze D."/>
        </authorList>
    </citation>
    <scope>NUCLEOTIDE SEQUENCE [MRNA]</scope>
    <source>
        <strain>cv. P2</strain>
    </source>
</reference>
<reference key="2">
    <citation type="journal article" date="1990" name="Plant Cell">
        <title>Tissue-specific and pathogen-induced regulation of a Nicotiana plumbaginifolia beta-1,3-glucanase gene.</title>
        <authorList>
            <person name="Castresana C."/>
            <person name="de Carvalho F."/>
            <person name="Gheysen G."/>
            <person name="Habets M."/>
            <person name="Inze D."/>
            <person name="van Montagu M."/>
        </authorList>
    </citation>
    <scope>NUCLEOTIDE SEQUENCE [GENOMIC DNA]</scope>
</reference>
<organism>
    <name type="scientific">Nicotiana plumbaginifolia</name>
    <name type="common">Leadwort-leaved tobacco</name>
    <name type="synonym">Tex-Mex tobacco</name>
    <dbReference type="NCBI Taxonomy" id="4092"/>
    <lineage>
        <taxon>Eukaryota</taxon>
        <taxon>Viridiplantae</taxon>
        <taxon>Streptophyta</taxon>
        <taxon>Embryophyta</taxon>
        <taxon>Tracheophyta</taxon>
        <taxon>Spermatophyta</taxon>
        <taxon>Magnoliopsida</taxon>
        <taxon>eudicotyledons</taxon>
        <taxon>Gunneridae</taxon>
        <taxon>Pentapetalae</taxon>
        <taxon>asterids</taxon>
        <taxon>lamiids</taxon>
        <taxon>Solanales</taxon>
        <taxon>Solanaceae</taxon>
        <taxon>Nicotianoideae</taxon>
        <taxon>Nicotianeae</taxon>
        <taxon>Nicotiana</taxon>
    </lineage>
</organism>
<sequence>MDTSHKHIALQMAAIILLGLLVSSTEIVGAQSVGVCYGMLGNNLPPASQVVQLYKSKNIRRMRLYDPNQAALQALRGSNIEVMLGVPNSDLQNIAANPSNANNWVQRNVRNFWPAVKFRYIAVGNEVSPVTGTSSLTRYLLPAMRNIRNAISSAGLQNNIKVSSSVDMTLIGNSFPPSQGSFRNDVRSFIDPIIGFVRRINSPLLVNIYPYFSYAGNPRDISLPYALFTAPNVVVQDGSLGYRNLFDAMSDAVYAALSRAGGGSIEIVVSESGWPSAGAFAATTNNAATYYKNLIQHVKRGSPRRPNKVIETYLFAMFDENNKNPELEKHFGLFSPNKQPKYPLSFGFSDRYWDISAENNATAASLISEM</sequence>
<comment type="catalytic activity">
    <reaction>
        <text>Hydrolysis of (1-&gt;4)-beta-D-glucosidic linkages in beta-D-glucans containing (1-&gt;3)- and (1-&gt;4)-bonds.</text>
        <dbReference type="EC" id="3.2.1.73"/>
    </reaction>
</comment>
<comment type="pathway">
    <text>Glycan metabolism; beta-D-glucan degradation.</text>
</comment>
<comment type="miscellaneous">
    <text>The expression of beta-glucanase is influenced by auxins and cytokinins.</text>
</comment>
<comment type="similarity">
    <text evidence="3">Belongs to the glycosyl hydrolase 17 family.</text>
</comment>
<dbReference type="EC" id="3.2.1.73"/>
<dbReference type="EMBL" id="X07280">
    <property type="protein sequence ID" value="CAA30261.1"/>
    <property type="molecule type" value="mRNA"/>
</dbReference>
<dbReference type="EMBL" id="M63634">
    <property type="protein sequence ID" value="AAA34078.1"/>
    <property type="molecule type" value="Genomic_DNA"/>
</dbReference>
<dbReference type="PIR" id="JQ0982">
    <property type="entry name" value="JQ0982"/>
</dbReference>
<dbReference type="PIR" id="S03209">
    <property type="entry name" value="S03209"/>
</dbReference>
<dbReference type="SMR" id="P07979"/>
<dbReference type="CAZy" id="GH17">
    <property type="family name" value="Glycoside Hydrolase Family 17"/>
</dbReference>
<dbReference type="UniPathway" id="UPA00350"/>
<dbReference type="GO" id="GO:0042972">
    <property type="term" value="F:licheninase activity"/>
    <property type="evidence" value="ECO:0007669"/>
    <property type="project" value="UniProtKB-EC"/>
</dbReference>
<dbReference type="GO" id="GO:0005975">
    <property type="term" value="P:carbohydrate metabolic process"/>
    <property type="evidence" value="ECO:0007669"/>
    <property type="project" value="InterPro"/>
</dbReference>
<dbReference type="FunFam" id="3.20.20.80:FF:000010">
    <property type="entry name" value="glucan endo-1,3-beta-glucosidase, basic"/>
    <property type="match status" value="1"/>
</dbReference>
<dbReference type="Gene3D" id="3.20.20.80">
    <property type="entry name" value="Glycosidases"/>
    <property type="match status" value="1"/>
</dbReference>
<dbReference type="InterPro" id="IPR000490">
    <property type="entry name" value="Glyco_hydro_17"/>
</dbReference>
<dbReference type="InterPro" id="IPR044965">
    <property type="entry name" value="Glyco_hydro_17_plant"/>
</dbReference>
<dbReference type="InterPro" id="IPR017853">
    <property type="entry name" value="Glycoside_hydrolase_SF"/>
</dbReference>
<dbReference type="PANTHER" id="PTHR32227">
    <property type="entry name" value="GLUCAN ENDO-1,3-BETA-GLUCOSIDASE BG1-RELATED-RELATED"/>
    <property type="match status" value="1"/>
</dbReference>
<dbReference type="Pfam" id="PF00332">
    <property type="entry name" value="Glyco_hydro_17"/>
    <property type="match status" value="1"/>
</dbReference>
<dbReference type="SUPFAM" id="SSF51445">
    <property type="entry name" value="(Trans)glycosidases"/>
    <property type="match status" value="1"/>
</dbReference>
<dbReference type="PROSITE" id="PS00587">
    <property type="entry name" value="GLYCOSYL_HYDROL_F17"/>
    <property type="match status" value="1"/>
</dbReference>
<proteinExistence type="evidence at transcript level"/>
<keyword id="KW-0326">Glycosidase</keyword>
<keyword id="KW-0378">Hydrolase</keyword>
<keyword id="KW-0732">Signal</keyword>
<feature type="signal peptide" evidence="2">
    <location>
        <begin position="1"/>
        <end position="30"/>
    </location>
</feature>
<feature type="chain" id="PRO_0000011898" description="Lichenase">
    <location>
        <begin position="31"/>
        <end position="370"/>
    </location>
</feature>
<feature type="active site" description="Proton donor" evidence="1">
    <location>
        <position position="126"/>
    </location>
</feature>
<feature type="active site" description="Nucleophile" evidence="1">
    <location>
        <position position="271"/>
    </location>
</feature>
<feature type="sequence conflict" description="In Ref. 2; AAA34078." evidence="3" ref="2">
    <original>S</original>
    <variation>T</variation>
    <location>
        <position position="164"/>
    </location>
</feature>
<feature type="sequence conflict" description="In Ref. 2; AAA34078." evidence="3" ref="2">
    <original>R</original>
    <variation>G</variation>
    <location>
        <position position="199"/>
    </location>
</feature>
<feature type="sequence conflict" description="In Ref. 2; AAA34078." evidence="3" ref="2">
    <original>S</original>
    <variation>L</variation>
    <location>
        <position position="250"/>
    </location>
</feature>
<name>GUB_NICPL</name>
<gene>
    <name type="primary">GN1</name>
</gene>
<evidence type="ECO:0000250" key="1">
    <source>
        <dbReference type="UniProtKB" id="O22317"/>
    </source>
</evidence>
<evidence type="ECO:0000255" key="2"/>
<evidence type="ECO:0000305" key="3"/>
<accession>P07979</accession>